<sequence>MKTFAQLRLLLAAAALALLSFSAQAQLSIEITGAGASRFPVIIPVFENEASLPRSVSDIVRADLERSGLFSLVDIGPLPLPEGQIPDLGSLRSRGADAALAASVFPQGDGRYEIRFRLFDTQKQTELGALALRMTAAQNRITAHRIADFVYEKLTGLPGYFATRIAYVVKTGPRYELQVADADGMNAQAALVSREPIISPAWSPDGGRLAYVSFEAKKPIIYVHTLATGQRQVVANFKGSNSAPAWSPDGQQLSVVLTKDGLSQLYVLNADGSGVRRLASSSGIDTEPAWSPDGQWIYFTSDRGGSPQIYRIPTAGGAAQRVTFDGTYNVTARPSADGRLLAFITRNNGRFQVAVQDLTTRQTTILTDSARDESPSFAPNGRMILYATDAGGRGVLAAVSSDGRVKQRLSVQAADVREPAWGPLQKQ</sequence>
<evidence type="ECO:0000255" key="1">
    <source>
        <dbReference type="HAMAP-Rule" id="MF_00671"/>
    </source>
</evidence>
<keyword id="KW-0131">Cell cycle</keyword>
<keyword id="KW-0132">Cell division</keyword>
<keyword id="KW-0574">Periplasm</keyword>
<keyword id="KW-1185">Reference proteome</keyword>
<keyword id="KW-0732">Signal</keyword>
<proteinExistence type="inferred from homology"/>
<protein>
    <recommendedName>
        <fullName evidence="1">Tol-Pal system protein TolB</fullName>
    </recommendedName>
</protein>
<name>TOLB_AZOSB</name>
<accession>A1K2H9</accession>
<gene>
    <name evidence="1" type="primary">tolB</name>
    <name type="ordered locus">azo0417</name>
</gene>
<organism>
    <name type="scientific">Azoarcus sp. (strain BH72)</name>
    <dbReference type="NCBI Taxonomy" id="418699"/>
    <lineage>
        <taxon>Bacteria</taxon>
        <taxon>Pseudomonadati</taxon>
        <taxon>Pseudomonadota</taxon>
        <taxon>Betaproteobacteria</taxon>
        <taxon>Rhodocyclales</taxon>
        <taxon>Zoogloeaceae</taxon>
        <taxon>Azoarcus</taxon>
    </lineage>
</organism>
<comment type="function">
    <text evidence="1">Part of the Tol-Pal system, which plays a role in outer membrane invagination during cell division and is important for maintaining outer membrane integrity.</text>
</comment>
<comment type="subunit">
    <text evidence="1">The Tol-Pal system is composed of five core proteins: the inner membrane proteins TolA, TolQ and TolR, the periplasmic protein TolB and the outer membrane protein Pal. They form a network linking the inner and outer membranes and the peptidoglycan layer.</text>
</comment>
<comment type="subcellular location">
    <subcellularLocation>
        <location evidence="1">Periplasm</location>
    </subcellularLocation>
</comment>
<comment type="similarity">
    <text evidence="1">Belongs to the TolB family.</text>
</comment>
<reference key="1">
    <citation type="journal article" date="2006" name="Nat. Biotechnol.">
        <title>Complete genome of the mutualistic, N2-fixing grass endophyte Azoarcus sp. strain BH72.</title>
        <authorList>
            <person name="Krause A."/>
            <person name="Ramakumar A."/>
            <person name="Bartels D."/>
            <person name="Battistoni F."/>
            <person name="Bekel T."/>
            <person name="Boch J."/>
            <person name="Boehm M."/>
            <person name="Friedrich F."/>
            <person name="Hurek T."/>
            <person name="Krause L."/>
            <person name="Linke B."/>
            <person name="McHardy A.C."/>
            <person name="Sarkar A."/>
            <person name="Schneiker S."/>
            <person name="Syed A.A."/>
            <person name="Thauer R."/>
            <person name="Vorhoelter F.-J."/>
            <person name="Weidner S."/>
            <person name="Puehler A."/>
            <person name="Reinhold-Hurek B."/>
            <person name="Kaiser O."/>
            <person name="Goesmann A."/>
        </authorList>
    </citation>
    <scope>NUCLEOTIDE SEQUENCE [LARGE SCALE GENOMIC DNA]</scope>
    <source>
        <strain>BH72</strain>
    </source>
</reference>
<dbReference type="EMBL" id="AM406670">
    <property type="protein sequence ID" value="CAL93034.1"/>
    <property type="molecule type" value="Genomic_DNA"/>
</dbReference>
<dbReference type="RefSeq" id="WP_011764152.1">
    <property type="nucleotide sequence ID" value="NC_008702.1"/>
</dbReference>
<dbReference type="SMR" id="A1K2H9"/>
<dbReference type="STRING" id="62928.azo0417"/>
<dbReference type="KEGG" id="aoa:dqs_0428"/>
<dbReference type="KEGG" id="azo:azo0417"/>
<dbReference type="eggNOG" id="COG0823">
    <property type="taxonomic scope" value="Bacteria"/>
</dbReference>
<dbReference type="HOGENOM" id="CLU_047123_0_0_4"/>
<dbReference type="OrthoDB" id="9802240at2"/>
<dbReference type="Proteomes" id="UP000002588">
    <property type="component" value="Chromosome"/>
</dbReference>
<dbReference type="GO" id="GO:0042597">
    <property type="term" value="C:periplasmic space"/>
    <property type="evidence" value="ECO:0007669"/>
    <property type="project" value="UniProtKB-SubCell"/>
</dbReference>
<dbReference type="GO" id="GO:0051301">
    <property type="term" value="P:cell division"/>
    <property type="evidence" value="ECO:0007669"/>
    <property type="project" value="UniProtKB-UniRule"/>
</dbReference>
<dbReference type="GO" id="GO:0017038">
    <property type="term" value="P:protein import"/>
    <property type="evidence" value="ECO:0007669"/>
    <property type="project" value="InterPro"/>
</dbReference>
<dbReference type="Gene3D" id="2.120.10.30">
    <property type="entry name" value="TolB, C-terminal domain"/>
    <property type="match status" value="1"/>
</dbReference>
<dbReference type="Gene3D" id="3.40.50.10070">
    <property type="entry name" value="TolB, N-terminal domain"/>
    <property type="match status" value="1"/>
</dbReference>
<dbReference type="HAMAP" id="MF_00671">
    <property type="entry name" value="TolB"/>
    <property type="match status" value="1"/>
</dbReference>
<dbReference type="InterPro" id="IPR011042">
    <property type="entry name" value="6-blade_b-propeller_TolB-like"/>
</dbReference>
<dbReference type="InterPro" id="IPR011659">
    <property type="entry name" value="PD40"/>
</dbReference>
<dbReference type="InterPro" id="IPR014167">
    <property type="entry name" value="Tol-Pal_TolB"/>
</dbReference>
<dbReference type="InterPro" id="IPR007195">
    <property type="entry name" value="TolB_N"/>
</dbReference>
<dbReference type="NCBIfam" id="TIGR02800">
    <property type="entry name" value="propeller_TolB"/>
    <property type="match status" value="1"/>
</dbReference>
<dbReference type="PANTHER" id="PTHR36842:SF1">
    <property type="entry name" value="PROTEIN TOLB"/>
    <property type="match status" value="1"/>
</dbReference>
<dbReference type="PANTHER" id="PTHR36842">
    <property type="entry name" value="PROTEIN TOLB HOMOLOG"/>
    <property type="match status" value="1"/>
</dbReference>
<dbReference type="Pfam" id="PF07676">
    <property type="entry name" value="PD40"/>
    <property type="match status" value="4"/>
</dbReference>
<dbReference type="Pfam" id="PF04052">
    <property type="entry name" value="TolB_N"/>
    <property type="match status" value="1"/>
</dbReference>
<dbReference type="SUPFAM" id="SSF52964">
    <property type="entry name" value="TolB, N-terminal domain"/>
    <property type="match status" value="1"/>
</dbReference>
<dbReference type="SUPFAM" id="SSF69304">
    <property type="entry name" value="Tricorn protease N-terminal domain"/>
    <property type="match status" value="1"/>
</dbReference>
<feature type="signal peptide" evidence="1">
    <location>
        <begin position="1"/>
        <end position="25"/>
    </location>
</feature>
<feature type="chain" id="PRO_1000026699" description="Tol-Pal system protein TolB" evidence="1">
    <location>
        <begin position="26"/>
        <end position="427"/>
    </location>
</feature>